<accession>Q2KCV5</accession>
<sequence>MNMLTEAAVEKALDQKMSNVPYKMIGQDVSVYYGEKRALFDVNLNIRENTVTALIGPSGCGKSTFLRSLNRMNDTIEGCRVAGKITLDGDDIYDPDIDVVELRARVGMVFQKPNPFPKSIYENVSYGPRIHGLAKSKADLDQIVESSLQRAGLWNEVKDRVHESGTGLSGGQQQRLCIARAVAVSPEVILMDEPCSALDPIATAKVEELIHELRENYTIVIVTHSMQQAARVSQRTAMFHLGNLVEENDTDKMFTNPDDPRTQDYIMGRFG</sequence>
<comment type="function">
    <text evidence="1">Part of the ABC transporter complex PstSACB involved in phosphate import. Responsible for energy coupling to the transport system.</text>
</comment>
<comment type="catalytic activity">
    <reaction evidence="1">
        <text>phosphate(out) + ATP + H2O = ADP + 2 phosphate(in) + H(+)</text>
        <dbReference type="Rhea" id="RHEA:24440"/>
        <dbReference type="ChEBI" id="CHEBI:15377"/>
        <dbReference type="ChEBI" id="CHEBI:15378"/>
        <dbReference type="ChEBI" id="CHEBI:30616"/>
        <dbReference type="ChEBI" id="CHEBI:43474"/>
        <dbReference type="ChEBI" id="CHEBI:456216"/>
        <dbReference type="EC" id="7.3.2.1"/>
    </reaction>
</comment>
<comment type="subunit">
    <text evidence="1">The complex is composed of two ATP-binding proteins (PstB), two transmembrane proteins (PstC and PstA) and a solute-binding protein (PstS).</text>
</comment>
<comment type="subcellular location">
    <subcellularLocation>
        <location evidence="1">Cell inner membrane</location>
        <topology evidence="1">Peripheral membrane protein</topology>
    </subcellularLocation>
</comment>
<comment type="similarity">
    <text evidence="1">Belongs to the ABC transporter superfamily. Phosphate importer (TC 3.A.1.7) family.</text>
</comment>
<feature type="chain" id="PRO_0000272507" description="Phosphate import ATP-binding protein PstB">
    <location>
        <begin position="1"/>
        <end position="271"/>
    </location>
</feature>
<feature type="domain" description="ABC transporter" evidence="1">
    <location>
        <begin position="24"/>
        <end position="266"/>
    </location>
</feature>
<feature type="binding site" evidence="1">
    <location>
        <begin position="56"/>
        <end position="63"/>
    </location>
    <ligand>
        <name>ATP</name>
        <dbReference type="ChEBI" id="CHEBI:30616"/>
    </ligand>
</feature>
<organism>
    <name type="scientific">Rhizobium etli (strain ATCC 51251 / DSM 11541 / JCM 21823 / NBRC 15573 / CFN 42)</name>
    <dbReference type="NCBI Taxonomy" id="347834"/>
    <lineage>
        <taxon>Bacteria</taxon>
        <taxon>Pseudomonadati</taxon>
        <taxon>Pseudomonadota</taxon>
        <taxon>Alphaproteobacteria</taxon>
        <taxon>Hyphomicrobiales</taxon>
        <taxon>Rhizobiaceae</taxon>
        <taxon>Rhizobium/Agrobacterium group</taxon>
        <taxon>Rhizobium</taxon>
    </lineage>
</organism>
<gene>
    <name evidence="1" type="primary">pstB</name>
    <name type="ordered locus">RHE_CH00512</name>
</gene>
<name>PSTB_RHIEC</name>
<keyword id="KW-0067">ATP-binding</keyword>
<keyword id="KW-0997">Cell inner membrane</keyword>
<keyword id="KW-1003">Cell membrane</keyword>
<keyword id="KW-0472">Membrane</keyword>
<keyword id="KW-0547">Nucleotide-binding</keyword>
<keyword id="KW-0592">Phosphate transport</keyword>
<keyword id="KW-1185">Reference proteome</keyword>
<keyword id="KW-1278">Translocase</keyword>
<keyword id="KW-0813">Transport</keyword>
<reference key="1">
    <citation type="journal article" date="2006" name="Proc. Natl. Acad. Sci. U.S.A.">
        <title>The partitioned Rhizobium etli genome: genetic and metabolic redundancy in seven interacting replicons.</title>
        <authorList>
            <person name="Gonzalez V."/>
            <person name="Santamaria R.I."/>
            <person name="Bustos P."/>
            <person name="Hernandez-Gonzalez I."/>
            <person name="Medrano-Soto A."/>
            <person name="Moreno-Hagelsieb G."/>
            <person name="Janga S.C."/>
            <person name="Ramirez M.A."/>
            <person name="Jimenez-Jacinto V."/>
            <person name="Collado-Vides J."/>
            <person name="Davila G."/>
        </authorList>
    </citation>
    <scope>NUCLEOTIDE SEQUENCE [LARGE SCALE GENOMIC DNA]</scope>
    <source>
        <strain>ATCC 51251 / DSM 11541 / JCM 21823 / NBRC 15573 / CFN 42</strain>
    </source>
</reference>
<evidence type="ECO:0000255" key="1">
    <source>
        <dbReference type="HAMAP-Rule" id="MF_01702"/>
    </source>
</evidence>
<protein>
    <recommendedName>
        <fullName evidence="1">Phosphate import ATP-binding protein PstB</fullName>
        <ecNumber evidence="1">7.3.2.1</ecNumber>
    </recommendedName>
    <alternativeName>
        <fullName evidence="1">ABC phosphate transporter</fullName>
    </alternativeName>
    <alternativeName>
        <fullName evidence="1">Phosphate-transporting ATPase</fullName>
    </alternativeName>
</protein>
<proteinExistence type="inferred from homology"/>
<dbReference type="EC" id="7.3.2.1" evidence="1"/>
<dbReference type="EMBL" id="CP000133">
    <property type="protein sequence ID" value="ABC89331.1"/>
    <property type="molecule type" value="Genomic_DNA"/>
</dbReference>
<dbReference type="RefSeq" id="WP_011423887.1">
    <property type="nucleotide sequence ID" value="NC_007761.1"/>
</dbReference>
<dbReference type="SMR" id="Q2KCV5"/>
<dbReference type="KEGG" id="ret:RHE_CH00512"/>
<dbReference type="eggNOG" id="COG1117">
    <property type="taxonomic scope" value="Bacteria"/>
</dbReference>
<dbReference type="HOGENOM" id="CLU_000604_1_22_5"/>
<dbReference type="OrthoDB" id="9802264at2"/>
<dbReference type="Proteomes" id="UP000001936">
    <property type="component" value="Chromosome"/>
</dbReference>
<dbReference type="GO" id="GO:0005886">
    <property type="term" value="C:plasma membrane"/>
    <property type="evidence" value="ECO:0007669"/>
    <property type="project" value="UniProtKB-SubCell"/>
</dbReference>
<dbReference type="GO" id="GO:0005524">
    <property type="term" value="F:ATP binding"/>
    <property type="evidence" value="ECO:0007669"/>
    <property type="project" value="UniProtKB-KW"/>
</dbReference>
<dbReference type="GO" id="GO:0016887">
    <property type="term" value="F:ATP hydrolysis activity"/>
    <property type="evidence" value="ECO:0007669"/>
    <property type="project" value="InterPro"/>
</dbReference>
<dbReference type="GO" id="GO:0015415">
    <property type="term" value="F:ATPase-coupled phosphate ion transmembrane transporter activity"/>
    <property type="evidence" value="ECO:0007669"/>
    <property type="project" value="UniProtKB-EC"/>
</dbReference>
<dbReference type="GO" id="GO:0035435">
    <property type="term" value="P:phosphate ion transmembrane transport"/>
    <property type="evidence" value="ECO:0007669"/>
    <property type="project" value="InterPro"/>
</dbReference>
<dbReference type="CDD" id="cd03260">
    <property type="entry name" value="ABC_PstB_phosphate_transporter"/>
    <property type="match status" value="1"/>
</dbReference>
<dbReference type="Gene3D" id="3.40.50.300">
    <property type="entry name" value="P-loop containing nucleotide triphosphate hydrolases"/>
    <property type="match status" value="1"/>
</dbReference>
<dbReference type="InterPro" id="IPR003593">
    <property type="entry name" value="AAA+_ATPase"/>
</dbReference>
<dbReference type="InterPro" id="IPR003439">
    <property type="entry name" value="ABC_transporter-like_ATP-bd"/>
</dbReference>
<dbReference type="InterPro" id="IPR017871">
    <property type="entry name" value="ABC_transporter-like_CS"/>
</dbReference>
<dbReference type="InterPro" id="IPR027417">
    <property type="entry name" value="P-loop_NTPase"/>
</dbReference>
<dbReference type="InterPro" id="IPR005670">
    <property type="entry name" value="PstB-like"/>
</dbReference>
<dbReference type="NCBIfam" id="TIGR00972">
    <property type="entry name" value="3a0107s01c2"/>
    <property type="match status" value="1"/>
</dbReference>
<dbReference type="PANTHER" id="PTHR43423">
    <property type="entry name" value="ABC TRANSPORTER I FAMILY MEMBER 17"/>
    <property type="match status" value="1"/>
</dbReference>
<dbReference type="PANTHER" id="PTHR43423:SF1">
    <property type="entry name" value="ABC TRANSPORTER I FAMILY MEMBER 17"/>
    <property type="match status" value="1"/>
</dbReference>
<dbReference type="Pfam" id="PF00005">
    <property type="entry name" value="ABC_tran"/>
    <property type="match status" value="1"/>
</dbReference>
<dbReference type="SMART" id="SM00382">
    <property type="entry name" value="AAA"/>
    <property type="match status" value="1"/>
</dbReference>
<dbReference type="SUPFAM" id="SSF52540">
    <property type="entry name" value="P-loop containing nucleoside triphosphate hydrolases"/>
    <property type="match status" value="1"/>
</dbReference>
<dbReference type="PROSITE" id="PS00211">
    <property type="entry name" value="ABC_TRANSPORTER_1"/>
    <property type="match status" value="1"/>
</dbReference>
<dbReference type="PROSITE" id="PS50893">
    <property type="entry name" value="ABC_TRANSPORTER_2"/>
    <property type="match status" value="1"/>
</dbReference>
<dbReference type="PROSITE" id="PS51238">
    <property type="entry name" value="PSTB"/>
    <property type="match status" value="1"/>
</dbReference>